<sequence>MGDPKKSRKKWESPGHPWIKERIGYEQELLGKYGLRNKREIWIAQSIIRKFRHQARSLLALPPAERAVREKQLVGKLLKMGLLKRETATVDDILSLTEQDLLERRLQTIVYKKGLANTTYQARQLIIHGHIAVNGKRVTSPGYIVNVDEENLIDYYVTSSFKSRPPVMAQQEGGEAGVKQA</sequence>
<feature type="chain" id="PRO_1000214307" description="Small ribosomal subunit protein uS4">
    <location>
        <begin position="1"/>
        <end position="181"/>
    </location>
</feature>
<feature type="domain" description="S4 RNA-binding" evidence="1">
    <location>
        <begin position="104"/>
        <end position="166"/>
    </location>
</feature>
<reference key="1">
    <citation type="journal article" date="2009" name="Proc. Natl. Acad. Sci. U.S.A.">
        <title>Biogeography of the Sulfolobus islandicus pan-genome.</title>
        <authorList>
            <person name="Reno M.L."/>
            <person name="Held N.L."/>
            <person name="Fields C.J."/>
            <person name="Burke P.V."/>
            <person name="Whitaker R.J."/>
        </authorList>
    </citation>
    <scope>NUCLEOTIDE SEQUENCE [LARGE SCALE GENOMIC DNA]</scope>
    <source>
        <strain>Y.N.15.51 / Yellowstone #2</strain>
    </source>
</reference>
<organism>
    <name type="scientific">Saccharolobus islandicus (strain Y.N.15.51 / Yellowstone #2)</name>
    <name type="common">Sulfolobus islandicus</name>
    <dbReference type="NCBI Taxonomy" id="419942"/>
    <lineage>
        <taxon>Archaea</taxon>
        <taxon>Thermoproteota</taxon>
        <taxon>Thermoprotei</taxon>
        <taxon>Sulfolobales</taxon>
        <taxon>Sulfolobaceae</taxon>
        <taxon>Saccharolobus</taxon>
    </lineage>
</organism>
<comment type="function">
    <text evidence="1">One of the primary rRNA binding proteins, it binds directly to 16S rRNA where it nucleates assembly of the body of the 30S subunit.</text>
</comment>
<comment type="function">
    <text evidence="1">With S5 and S12 plays an important role in translational accuracy.</text>
</comment>
<comment type="subunit">
    <text evidence="1">Part of the 30S ribosomal subunit. Contacts protein S5. The interaction surface between S4 and S5 is involved in control of translational fidelity.</text>
</comment>
<comment type="similarity">
    <text evidence="1">Belongs to the universal ribosomal protein uS4 family.</text>
</comment>
<name>RS4_SACI1</name>
<dbReference type="EMBL" id="CP001404">
    <property type="protein sequence ID" value="ACP47872.1"/>
    <property type="molecule type" value="Genomic_DNA"/>
</dbReference>
<dbReference type="RefSeq" id="WP_012712013.1">
    <property type="nucleotide sequence ID" value="NC_012623.1"/>
</dbReference>
<dbReference type="SMR" id="C3NMQ2"/>
<dbReference type="KEGG" id="sin:YN1551_0747"/>
<dbReference type="HOGENOM" id="CLU_089738_1_1_2"/>
<dbReference type="Proteomes" id="UP000006818">
    <property type="component" value="Chromosome"/>
</dbReference>
<dbReference type="GO" id="GO:0015935">
    <property type="term" value="C:small ribosomal subunit"/>
    <property type="evidence" value="ECO:0007669"/>
    <property type="project" value="InterPro"/>
</dbReference>
<dbReference type="GO" id="GO:0019843">
    <property type="term" value="F:rRNA binding"/>
    <property type="evidence" value="ECO:0007669"/>
    <property type="project" value="UniProtKB-UniRule"/>
</dbReference>
<dbReference type="GO" id="GO:0003735">
    <property type="term" value="F:structural constituent of ribosome"/>
    <property type="evidence" value="ECO:0007669"/>
    <property type="project" value="InterPro"/>
</dbReference>
<dbReference type="GO" id="GO:0042274">
    <property type="term" value="P:ribosomal small subunit biogenesis"/>
    <property type="evidence" value="ECO:0007669"/>
    <property type="project" value="TreeGrafter"/>
</dbReference>
<dbReference type="GO" id="GO:0006412">
    <property type="term" value="P:translation"/>
    <property type="evidence" value="ECO:0007669"/>
    <property type="project" value="UniProtKB-UniRule"/>
</dbReference>
<dbReference type="CDD" id="cd00165">
    <property type="entry name" value="S4"/>
    <property type="match status" value="1"/>
</dbReference>
<dbReference type="FunFam" id="3.10.290.10:FF:000026">
    <property type="entry name" value="30S ribosomal protein S4"/>
    <property type="match status" value="1"/>
</dbReference>
<dbReference type="Gene3D" id="3.10.290.10">
    <property type="entry name" value="RNA-binding S4 domain"/>
    <property type="match status" value="1"/>
</dbReference>
<dbReference type="HAMAP" id="MF_01306_A">
    <property type="entry name" value="Ribosomal_uS4_A"/>
    <property type="match status" value="1"/>
</dbReference>
<dbReference type="InterPro" id="IPR022801">
    <property type="entry name" value="Ribosomal_uS4"/>
</dbReference>
<dbReference type="InterPro" id="IPR022802">
    <property type="entry name" value="Ribosomal_uS4_arc"/>
</dbReference>
<dbReference type="InterPro" id="IPR018079">
    <property type="entry name" value="Ribosomal_uS4_CS"/>
</dbReference>
<dbReference type="InterPro" id="IPR005710">
    <property type="entry name" value="Ribosomal_uS4_euk/arc"/>
</dbReference>
<dbReference type="InterPro" id="IPR001912">
    <property type="entry name" value="Ribosomal_uS4_N"/>
</dbReference>
<dbReference type="InterPro" id="IPR002942">
    <property type="entry name" value="S4_RNA-bd"/>
</dbReference>
<dbReference type="InterPro" id="IPR036986">
    <property type="entry name" value="S4_RNA-bd_sf"/>
</dbReference>
<dbReference type="NCBIfam" id="NF003139">
    <property type="entry name" value="PRK04051.1"/>
    <property type="match status" value="1"/>
</dbReference>
<dbReference type="NCBIfam" id="TIGR01018">
    <property type="entry name" value="uS4_arch"/>
    <property type="match status" value="1"/>
</dbReference>
<dbReference type="PANTHER" id="PTHR11831">
    <property type="entry name" value="30S 40S RIBOSOMAL PROTEIN"/>
    <property type="match status" value="1"/>
</dbReference>
<dbReference type="PANTHER" id="PTHR11831:SF5">
    <property type="entry name" value="40S RIBOSOMAL PROTEIN S9"/>
    <property type="match status" value="1"/>
</dbReference>
<dbReference type="Pfam" id="PF00163">
    <property type="entry name" value="Ribosomal_S4"/>
    <property type="match status" value="1"/>
</dbReference>
<dbReference type="Pfam" id="PF01479">
    <property type="entry name" value="S4"/>
    <property type="match status" value="1"/>
</dbReference>
<dbReference type="SMART" id="SM01390">
    <property type="entry name" value="Ribosomal_S4"/>
    <property type="match status" value="1"/>
</dbReference>
<dbReference type="SMART" id="SM00363">
    <property type="entry name" value="S4"/>
    <property type="match status" value="1"/>
</dbReference>
<dbReference type="SUPFAM" id="SSF55174">
    <property type="entry name" value="Alpha-L RNA-binding motif"/>
    <property type="match status" value="1"/>
</dbReference>
<dbReference type="PROSITE" id="PS00632">
    <property type="entry name" value="RIBOSOMAL_S4"/>
    <property type="match status" value="1"/>
</dbReference>
<dbReference type="PROSITE" id="PS50889">
    <property type="entry name" value="S4"/>
    <property type="match status" value="1"/>
</dbReference>
<keyword id="KW-0687">Ribonucleoprotein</keyword>
<keyword id="KW-0689">Ribosomal protein</keyword>
<keyword id="KW-0694">RNA-binding</keyword>
<keyword id="KW-0699">rRNA-binding</keyword>
<accession>C3NMQ2</accession>
<evidence type="ECO:0000255" key="1">
    <source>
        <dbReference type="HAMAP-Rule" id="MF_01306"/>
    </source>
</evidence>
<evidence type="ECO:0000305" key="2"/>
<gene>
    <name evidence="1" type="primary">rps4</name>
    <name type="ordered locus">YN1551_0747</name>
</gene>
<protein>
    <recommendedName>
        <fullName evidence="1">Small ribosomal subunit protein uS4</fullName>
    </recommendedName>
    <alternativeName>
        <fullName evidence="2">30S ribosomal protein S4</fullName>
    </alternativeName>
</protein>
<proteinExistence type="inferred from homology"/>